<protein>
    <recommendedName>
        <fullName evidence="1">Peptide methionine sulfoxide reductase MsrA</fullName>
        <shortName evidence="1">Protein-methionine-S-oxide reductase</shortName>
        <ecNumber evidence="1">1.8.4.11</ecNumber>
    </recommendedName>
    <alternativeName>
        <fullName evidence="1">Peptide-methionine (S)-S-oxide reductase</fullName>
        <shortName evidence="1">Peptide Met(O) reductase</shortName>
    </alternativeName>
</protein>
<feature type="chain" id="PRO_1000145410" description="Peptide methionine sulfoxide reductase MsrA">
    <location>
        <begin position="1"/>
        <end position="177"/>
    </location>
</feature>
<feature type="active site" evidence="1">
    <location>
        <position position="12"/>
    </location>
</feature>
<sequence length="177" mass="19202">MGTETATLGGGCFWCTEAAMEELAGVTDVTSGYAGGDTADPSYRDVCSGTTGHAEVVQVEYDTAELAYEDVLEVFFTVHDPTTVDREGPDVGSQYRSIVLPHDDQQHERATAFVDELAAADAFDGSIVTEIEPLETFYPAAEKHQNYFEKNPDAAYCTVNVAPKVSKVREQFGARTE</sequence>
<evidence type="ECO:0000255" key="1">
    <source>
        <dbReference type="HAMAP-Rule" id="MF_01401"/>
    </source>
</evidence>
<keyword id="KW-0560">Oxidoreductase</keyword>
<organism>
    <name type="scientific">Halobacterium salinarum (strain ATCC 29341 / DSM 671 / R1)</name>
    <dbReference type="NCBI Taxonomy" id="478009"/>
    <lineage>
        <taxon>Archaea</taxon>
        <taxon>Methanobacteriati</taxon>
        <taxon>Methanobacteriota</taxon>
        <taxon>Stenosarchaea group</taxon>
        <taxon>Halobacteria</taxon>
        <taxon>Halobacteriales</taxon>
        <taxon>Halobacteriaceae</taxon>
        <taxon>Halobacterium</taxon>
        <taxon>Halobacterium salinarum NRC-34001</taxon>
    </lineage>
</organism>
<proteinExistence type="inferred from homology"/>
<name>MSRA_HALS3</name>
<comment type="function">
    <text evidence="1">Has an important function as a repair enzyme for proteins that have been inactivated by oxidation. Catalyzes the reversible oxidation-reduction of methionine sulfoxide in proteins to methionine.</text>
</comment>
<comment type="catalytic activity">
    <reaction evidence="1">
        <text>L-methionyl-[protein] + [thioredoxin]-disulfide + H2O = L-methionyl-(S)-S-oxide-[protein] + [thioredoxin]-dithiol</text>
        <dbReference type="Rhea" id="RHEA:14217"/>
        <dbReference type="Rhea" id="RHEA-COMP:10698"/>
        <dbReference type="Rhea" id="RHEA-COMP:10700"/>
        <dbReference type="Rhea" id="RHEA-COMP:12313"/>
        <dbReference type="Rhea" id="RHEA-COMP:12315"/>
        <dbReference type="ChEBI" id="CHEBI:15377"/>
        <dbReference type="ChEBI" id="CHEBI:16044"/>
        <dbReference type="ChEBI" id="CHEBI:29950"/>
        <dbReference type="ChEBI" id="CHEBI:44120"/>
        <dbReference type="ChEBI" id="CHEBI:50058"/>
        <dbReference type="EC" id="1.8.4.11"/>
    </reaction>
</comment>
<comment type="catalytic activity">
    <reaction evidence="1">
        <text>[thioredoxin]-disulfide + L-methionine + H2O = L-methionine (S)-S-oxide + [thioredoxin]-dithiol</text>
        <dbReference type="Rhea" id="RHEA:19993"/>
        <dbReference type="Rhea" id="RHEA-COMP:10698"/>
        <dbReference type="Rhea" id="RHEA-COMP:10700"/>
        <dbReference type="ChEBI" id="CHEBI:15377"/>
        <dbReference type="ChEBI" id="CHEBI:29950"/>
        <dbReference type="ChEBI" id="CHEBI:50058"/>
        <dbReference type="ChEBI" id="CHEBI:57844"/>
        <dbReference type="ChEBI" id="CHEBI:58772"/>
        <dbReference type="EC" id="1.8.4.11"/>
    </reaction>
</comment>
<comment type="similarity">
    <text evidence="1">Belongs to the MsrA Met sulfoxide reductase family.</text>
</comment>
<gene>
    <name evidence="1" type="primary">msrA</name>
    <name type="ordered locus">OE_2693F</name>
</gene>
<accession>B0R518</accession>
<dbReference type="EC" id="1.8.4.11" evidence="1"/>
<dbReference type="EMBL" id="AM774415">
    <property type="protein sequence ID" value="CAP13833.1"/>
    <property type="molecule type" value="Genomic_DNA"/>
</dbReference>
<dbReference type="RefSeq" id="WP_010902851.1">
    <property type="nucleotide sequence ID" value="NC_010364.1"/>
</dbReference>
<dbReference type="SMR" id="B0R518"/>
<dbReference type="EnsemblBacteria" id="CAP13833">
    <property type="protein sequence ID" value="CAP13833"/>
    <property type="gene ID" value="OE_2693F"/>
</dbReference>
<dbReference type="GeneID" id="89349533"/>
<dbReference type="KEGG" id="hsl:OE_2693F"/>
<dbReference type="HOGENOM" id="CLU_031040_10_0_2"/>
<dbReference type="PhylomeDB" id="B0R518"/>
<dbReference type="Proteomes" id="UP000001321">
    <property type="component" value="Chromosome"/>
</dbReference>
<dbReference type="GO" id="GO:0033744">
    <property type="term" value="F:L-methionine:thioredoxin-disulfide S-oxidoreductase activity"/>
    <property type="evidence" value="ECO:0007669"/>
    <property type="project" value="RHEA"/>
</dbReference>
<dbReference type="GO" id="GO:0008113">
    <property type="term" value="F:peptide-methionine (S)-S-oxide reductase activity"/>
    <property type="evidence" value="ECO:0007669"/>
    <property type="project" value="UniProtKB-UniRule"/>
</dbReference>
<dbReference type="GO" id="GO:0036211">
    <property type="term" value="P:protein modification process"/>
    <property type="evidence" value="ECO:0007669"/>
    <property type="project" value="UniProtKB-UniRule"/>
</dbReference>
<dbReference type="Gene3D" id="3.30.1060.10">
    <property type="entry name" value="Peptide methionine sulphoxide reductase MsrA"/>
    <property type="match status" value="1"/>
</dbReference>
<dbReference type="HAMAP" id="MF_01401">
    <property type="entry name" value="MsrA"/>
    <property type="match status" value="1"/>
</dbReference>
<dbReference type="InterPro" id="IPR002569">
    <property type="entry name" value="Met_Sox_Rdtase_MsrA_dom"/>
</dbReference>
<dbReference type="InterPro" id="IPR036509">
    <property type="entry name" value="Met_Sox_Rdtase_MsrA_sf"/>
</dbReference>
<dbReference type="NCBIfam" id="TIGR00401">
    <property type="entry name" value="msrA"/>
    <property type="match status" value="1"/>
</dbReference>
<dbReference type="PANTHER" id="PTHR43774">
    <property type="entry name" value="PEPTIDE METHIONINE SULFOXIDE REDUCTASE"/>
    <property type="match status" value="1"/>
</dbReference>
<dbReference type="PANTHER" id="PTHR43774:SF1">
    <property type="entry name" value="PEPTIDE METHIONINE SULFOXIDE REDUCTASE MSRA 2"/>
    <property type="match status" value="1"/>
</dbReference>
<dbReference type="Pfam" id="PF01625">
    <property type="entry name" value="PMSR"/>
    <property type="match status" value="1"/>
</dbReference>
<dbReference type="SUPFAM" id="SSF55068">
    <property type="entry name" value="Peptide methionine sulfoxide reductase"/>
    <property type="match status" value="1"/>
</dbReference>
<reference key="1">
    <citation type="journal article" date="2008" name="Genomics">
        <title>Evolution in the laboratory: the genome of Halobacterium salinarum strain R1 compared to that of strain NRC-1.</title>
        <authorList>
            <person name="Pfeiffer F."/>
            <person name="Schuster S.C."/>
            <person name="Broicher A."/>
            <person name="Falb M."/>
            <person name="Palm P."/>
            <person name="Rodewald K."/>
            <person name="Ruepp A."/>
            <person name="Soppa J."/>
            <person name="Tittor J."/>
            <person name="Oesterhelt D."/>
        </authorList>
    </citation>
    <scope>NUCLEOTIDE SEQUENCE [LARGE SCALE GENOMIC DNA]</scope>
    <source>
        <strain>ATCC 29341 / DSM 671 / R1</strain>
    </source>
</reference>